<sequence>MSDEPEHTAKVEPLRKPLPCPECGHPSHREHYPFCSDRCRTQDLSRWLKGSYAIPVAEDESNPDDDGRF</sequence>
<organism>
    <name type="scientific">Allorhizobium ampelinum (strain ATCC BAA-846 / DSM 112012 / S4)</name>
    <name type="common">Agrobacterium vitis (strain S4)</name>
    <dbReference type="NCBI Taxonomy" id="311402"/>
    <lineage>
        <taxon>Bacteria</taxon>
        <taxon>Pseudomonadati</taxon>
        <taxon>Pseudomonadota</taxon>
        <taxon>Alphaproteobacteria</taxon>
        <taxon>Hyphomicrobiales</taxon>
        <taxon>Rhizobiaceae</taxon>
        <taxon>Rhizobium/Agrobacterium group</taxon>
        <taxon>Allorhizobium</taxon>
        <taxon>Allorhizobium ampelinum</taxon>
    </lineage>
</organism>
<dbReference type="EMBL" id="CP000633">
    <property type="protein sequence ID" value="ACM35453.1"/>
    <property type="molecule type" value="Genomic_DNA"/>
</dbReference>
<dbReference type="RefSeq" id="WP_015914881.1">
    <property type="nucleotide sequence ID" value="NC_011989.1"/>
</dbReference>
<dbReference type="SMR" id="B9JR40"/>
<dbReference type="STRING" id="311402.Avi_0636"/>
<dbReference type="KEGG" id="avi:Avi_0636"/>
<dbReference type="eggNOG" id="COG3024">
    <property type="taxonomic scope" value="Bacteria"/>
</dbReference>
<dbReference type="HOGENOM" id="CLU_178280_2_2_5"/>
<dbReference type="Proteomes" id="UP000001596">
    <property type="component" value="Chromosome 1"/>
</dbReference>
<dbReference type="GO" id="GO:0008657">
    <property type="term" value="F:DNA topoisomerase type II (double strand cut, ATP-hydrolyzing) inhibitor activity"/>
    <property type="evidence" value="ECO:0007669"/>
    <property type="project" value="UniProtKB-UniRule"/>
</dbReference>
<dbReference type="GO" id="GO:0008270">
    <property type="term" value="F:zinc ion binding"/>
    <property type="evidence" value="ECO:0007669"/>
    <property type="project" value="UniProtKB-UniRule"/>
</dbReference>
<dbReference type="GO" id="GO:0006355">
    <property type="term" value="P:regulation of DNA-templated transcription"/>
    <property type="evidence" value="ECO:0007669"/>
    <property type="project" value="InterPro"/>
</dbReference>
<dbReference type="Gene3D" id="3.30.50.10">
    <property type="entry name" value="Erythroid Transcription Factor GATA-1, subunit A"/>
    <property type="match status" value="1"/>
</dbReference>
<dbReference type="HAMAP" id="MF_00649">
    <property type="entry name" value="DNA_gyrase_inhibitor_YacG"/>
    <property type="match status" value="1"/>
</dbReference>
<dbReference type="InterPro" id="IPR005584">
    <property type="entry name" value="DNA_gyrase_inhibitor_YacG"/>
</dbReference>
<dbReference type="InterPro" id="IPR013088">
    <property type="entry name" value="Znf_NHR/GATA"/>
</dbReference>
<dbReference type="NCBIfam" id="NF002362">
    <property type="entry name" value="PRK01343.1"/>
    <property type="match status" value="1"/>
</dbReference>
<dbReference type="PANTHER" id="PTHR36150">
    <property type="entry name" value="DNA GYRASE INHIBITOR YACG"/>
    <property type="match status" value="1"/>
</dbReference>
<dbReference type="PANTHER" id="PTHR36150:SF1">
    <property type="entry name" value="DNA GYRASE INHIBITOR YACG"/>
    <property type="match status" value="1"/>
</dbReference>
<dbReference type="Pfam" id="PF03884">
    <property type="entry name" value="YacG"/>
    <property type="match status" value="1"/>
</dbReference>
<dbReference type="SUPFAM" id="SSF57716">
    <property type="entry name" value="Glucocorticoid receptor-like (DNA-binding domain)"/>
    <property type="match status" value="1"/>
</dbReference>
<name>YACG_ALLAM</name>
<accession>B9JR40</accession>
<proteinExistence type="inferred from homology"/>
<reference key="1">
    <citation type="journal article" date="2009" name="J. Bacteriol.">
        <title>Genome sequences of three Agrobacterium biovars help elucidate the evolution of multichromosome genomes in bacteria.</title>
        <authorList>
            <person name="Slater S.C."/>
            <person name="Goldman B.S."/>
            <person name="Goodner B."/>
            <person name="Setubal J.C."/>
            <person name="Farrand S.K."/>
            <person name="Nester E.W."/>
            <person name="Burr T.J."/>
            <person name="Banta L."/>
            <person name="Dickerman A.W."/>
            <person name="Paulsen I."/>
            <person name="Otten L."/>
            <person name="Suen G."/>
            <person name="Welch R."/>
            <person name="Almeida N.F."/>
            <person name="Arnold F."/>
            <person name="Burton O.T."/>
            <person name="Du Z."/>
            <person name="Ewing A."/>
            <person name="Godsy E."/>
            <person name="Heisel S."/>
            <person name="Houmiel K.L."/>
            <person name="Jhaveri J."/>
            <person name="Lu J."/>
            <person name="Miller N.M."/>
            <person name="Norton S."/>
            <person name="Chen Q."/>
            <person name="Phoolcharoen W."/>
            <person name="Ohlin V."/>
            <person name="Ondrusek D."/>
            <person name="Pride N."/>
            <person name="Stricklin S.L."/>
            <person name="Sun J."/>
            <person name="Wheeler C."/>
            <person name="Wilson L."/>
            <person name="Zhu H."/>
            <person name="Wood D.W."/>
        </authorList>
    </citation>
    <scope>NUCLEOTIDE SEQUENCE [LARGE SCALE GENOMIC DNA]</scope>
    <source>
        <strain>ATCC BAA-846 / DSM 112012 / S4</strain>
    </source>
</reference>
<comment type="function">
    <text evidence="1">Inhibits all the catalytic activities of DNA gyrase by preventing its interaction with DNA. Acts by binding directly to the C-terminal domain of GyrB, which probably disrupts DNA binding by the gyrase.</text>
</comment>
<comment type="cofactor">
    <cofactor evidence="1">
        <name>Zn(2+)</name>
        <dbReference type="ChEBI" id="CHEBI:29105"/>
    </cofactor>
    <text evidence="1">Binds 1 zinc ion.</text>
</comment>
<comment type="subunit">
    <text evidence="1">Interacts with GyrB.</text>
</comment>
<comment type="similarity">
    <text evidence="1">Belongs to the DNA gyrase inhibitor YacG family.</text>
</comment>
<gene>
    <name evidence="1" type="primary">yacG</name>
    <name type="ordered locus">Avi_0636</name>
</gene>
<protein>
    <recommendedName>
        <fullName evidence="1">DNA gyrase inhibitor YacG</fullName>
    </recommendedName>
</protein>
<feature type="chain" id="PRO_1000200403" description="DNA gyrase inhibitor YacG">
    <location>
        <begin position="1"/>
        <end position="69"/>
    </location>
</feature>
<feature type="region of interest" description="Disordered" evidence="2">
    <location>
        <begin position="1"/>
        <end position="22"/>
    </location>
</feature>
<feature type="compositionally biased region" description="Basic and acidic residues" evidence="2">
    <location>
        <begin position="1"/>
        <end position="15"/>
    </location>
</feature>
<feature type="binding site" evidence="1">
    <location>
        <position position="20"/>
    </location>
    <ligand>
        <name>Zn(2+)</name>
        <dbReference type="ChEBI" id="CHEBI:29105"/>
    </ligand>
</feature>
<feature type="binding site" evidence="1">
    <location>
        <position position="23"/>
    </location>
    <ligand>
        <name>Zn(2+)</name>
        <dbReference type="ChEBI" id="CHEBI:29105"/>
    </ligand>
</feature>
<feature type="binding site" evidence="1">
    <location>
        <position position="35"/>
    </location>
    <ligand>
        <name>Zn(2+)</name>
        <dbReference type="ChEBI" id="CHEBI:29105"/>
    </ligand>
</feature>
<feature type="binding site" evidence="1">
    <location>
        <position position="39"/>
    </location>
    <ligand>
        <name>Zn(2+)</name>
        <dbReference type="ChEBI" id="CHEBI:29105"/>
    </ligand>
</feature>
<keyword id="KW-0479">Metal-binding</keyword>
<keyword id="KW-1185">Reference proteome</keyword>
<keyword id="KW-0862">Zinc</keyword>
<evidence type="ECO:0000255" key="1">
    <source>
        <dbReference type="HAMAP-Rule" id="MF_00649"/>
    </source>
</evidence>
<evidence type="ECO:0000256" key="2">
    <source>
        <dbReference type="SAM" id="MobiDB-lite"/>
    </source>
</evidence>